<dbReference type="EC" id="2.3.2.34" evidence="2"/>
<dbReference type="EMBL" id="BC077833">
    <property type="protein sequence ID" value="AAH77833.1"/>
    <property type="molecule type" value="mRNA"/>
</dbReference>
<dbReference type="RefSeq" id="NP_001086965.1">
    <property type="nucleotide sequence ID" value="NM_001093496.1"/>
</dbReference>
<dbReference type="SMR" id="Q6DCZ9"/>
<dbReference type="DNASU" id="446800"/>
<dbReference type="GeneID" id="446800"/>
<dbReference type="KEGG" id="xla:446800"/>
<dbReference type="AGR" id="Xenbase:XB-GENE-1005530"/>
<dbReference type="CTD" id="446800"/>
<dbReference type="Xenbase" id="XB-GENE-1005530">
    <property type="gene designation" value="ube2m.L"/>
</dbReference>
<dbReference type="OrthoDB" id="10249039at2759"/>
<dbReference type="UniPathway" id="UPA00885"/>
<dbReference type="Proteomes" id="UP000186698">
    <property type="component" value="Chromosome 7L"/>
</dbReference>
<dbReference type="Bgee" id="446800">
    <property type="expression patterns" value="Expressed in oocyte and 19 other cell types or tissues"/>
</dbReference>
<dbReference type="GO" id="GO:0005829">
    <property type="term" value="C:cytosol"/>
    <property type="evidence" value="ECO:0000318"/>
    <property type="project" value="GO_Central"/>
</dbReference>
<dbReference type="GO" id="GO:0005634">
    <property type="term" value="C:nucleus"/>
    <property type="evidence" value="ECO:0000318"/>
    <property type="project" value="GO_Central"/>
</dbReference>
<dbReference type="GO" id="GO:0005524">
    <property type="term" value="F:ATP binding"/>
    <property type="evidence" value="ECO:0007669"/>
    <property type="project" value="UniProtKB-KW"/>
</dbReference>
<dbReference type="GO" id="GO:0061654">
    <property type="term" value="F:NEDD8 conjugating enzyme activity"/>
    <property type="evidence" value="ECO:0007669"/>
    <property type="project" value="UniProtKB-EC"/>
</dbReference>
<dbReference type="GO" id="GO:0019788">
    <property type="term" value="F:NEDD8 transferase activity"/>
    <property type="evidence" value="ECO:0000250"/>
    <property type="project" value="UniProtKB"/>
</dbReference>
<dbReference type="GO" id="GO:0004842">
    <property type="term" value="F:ubiquitin-protein transferase activity"/>
    <property type="evidence" value="ECO:0000250"/>
    <property type="project" value="UniProtKB"/>
</dbReference>
<dbReference type="GO" id="GO:0036211">
    <property type="term" value="P:protein modification process"/>
    <property type="evidence" value="ECO:0000250"/>
    <property type="project" value="UniProtKB"/>
</dbReference>
<dbReference type="GO" id="GO:0045116">
    <property type="term" value="P:protein neddylation"/>
    <property type="evidence" value="ECO:0000250"/>
    <property type="project" value="UniProtKB"/>
</dbReference>
<dbReference type="CDD" id="cd23794">
    <property type="entry name" value="UBCc_UBE2F_UBE2M"/>
    <property type="match status" value="1"/>
</dbReference>
<dbReference type="FunFam" id="3.10.110.10:FF:000239">
    <property type="entry name" value="NEDD8-conjugating enzyme Ubc12"/>
    <property type="match status" value="1"/>
</dbReference>
<dbReference type="Gene3D" id="3.10.110.10">
    <property type="entry name" value="Ubiquitin Conjugating Enzyme"/>
    <property type="match status" value="1"/>
</dbReference>
<dbReference type="InterPro" id="IPR050113">
    <property type="entry name" value="Ub_conjugating_enzyme"/>
</dbReference>
<dbReference type="InterPro" id="IPR000608">
    <property type="entry name" value="UBQ-conjugat_E2_core"/>
</dbReference>
<dbReference type="InterPro" id="IPR023313">
    <property type="entry name" value="UBQ-conjugating_AS"/>
</dbReference>
<dbReference type="InterPro" id="IPR016135">
    <property type="entry name" value="UBQ-conjugating_enzyme/RWD"/>
</dbReference>
<dbReference type="PANTHER" id="PTHR24067">
    <property type="entry name" value="UBIQUITIN-CONJUGATING ENZYME E2"/>
    <property type="match status" value="1"/>
</dbReference>
<dbReference type="Pfam" id="PF00179">
    <property type="entry name" value="UQ_con"/>
    <property type="match status" value="1"/>
</dbReference>
<dbReference type="SMART" id="SM00212">
    <property type="entry name" value="UBCc"/>
    <property type="match status" value="1"/>
</dbReference>
<dbReference type="SUPFAM" id="SSF54495">
    <property type="entry name" value="UBC-like"/>
    <property type="match status" value="1"/>
</dbReference>
<dbReference type="PROSITE" id="PS00183">
    <property type="entry name" value="UBC_1"/>
    <property type="match status" value="1"/>
</dbReference>
<dbReference type="PROSITE" id="PS50127">
    <property type="entry name" value="UBC_2"/>
    <property type="match status" value="1"/>
</dbReference>
<reference key="1">
    <citation type="submission" date="2004-07" db="EMBL/GenBank/DDBJ databases">
        <authorList>
            <consortium name="NIH - Xenopus Gene Collection (XGC) project"/>
        </authorList>
    </citation>
    <scope>NUCLEOTIDE SEQUENCE [LARGE SCALE MRNA]</scope>
    <source>
        <tissue>Embryo</tissue>
    </source>
</reference>
<organism>
    <name type="scientific">Xenopus laevis</name>
    <name type="common">African clawed frog</name>
    <dbReference type="NCBI Taxonomy" id="8355"/>
    <lineage>
        <taxon>Eukaryota</taxon>
        <taxon>Metazoa</taxon>
        <taxon>Chordata</taxon>
        <taxon>Craniata</taxon>
        <taxon>Vertebrata</taxon>
        <taxon>Euteleostomi</taxon>
        <taxon>Amphibia</taxon>
        <taxon>Batrachia</taxon>
        <taxon>Anura</taxon>
        <taxon>Pipoidea</taxon>
        <taxon>Pipidae</taxon>
        <taxon>Xenopodinae</taxon>
        <taxon>Xenopus</taxon>
        <taxon>Xenopus</taxon>
    </lineage>
</organism>
<name>UBC12_XENLA</name>
<gene>
    <name type="primary">ube2m</name>
    <name type="synonym">ubc12</name>
</gene>
<evidence type="ECO:0000250" key="1"/>
<evidence type="ECO:0000250" key="2">
    <source>
        <dbReference type="UniProtKB" id="P61081"/>
    </source>
</evidence>
<evidence type="ECO:0000255" key="3">
    <source>
        <dbReference type="PROSITE-ProRule" id="PRU00388"/>
    </source>
</evidence>
<evidence type="ECO:0000255" key="4">
    <source>
        <dbReference type="PROSITE-ProRule" id="PRU10133"/>
    </source>
</evidence>
<evidence type="ECO:0000256" key="5">
    <source>
        <dbReference type="SAM" id="MobiDB-lite"/>
    </source>
</evidence>
<feature type="chain" id="PRO_0000082490" description="NEDD8-conjugating enzyme Ubc12">
    <location>
        <begin position="1"/>
        <end position="183"/>
    </location>
</feature>
<feature type="domain" description="UBC core" evidence="3">
    <location>
        <begin position="29"/>
        <end position="173"/>
    </location>
</feature>
<feature type="region of interest" description="Disordered" evidence="5">
    <location>
        <begin position="1"/>
        <end position="28"/>
    </location>
</feature>
<feature type="active site" description="Glycyl thioester intermediate" evidence="3 4">
    <location>
        <position position="111"/>
    </location>
</feature>
<feature type="modified residue" description="N-acetylmethionine" evidence="1">
    <location>
        <position position="1"/>
    </location>
</feature>
<proteinExistence type="evidence at transcript level"/>
<protein>
    <recommendedName>
        <fullName>NEDD8-conjugating enzyme Ubc12</fullName>
        <ecNumber evidence="2">2.3.2.34</ecNumber>
    </recommendedName>
    <alternativeName>
        <fullName>NEDD8 carrier protein</fullName>
    </alternativeName>
    <alternativeName>
        <fullName>Ubiquitin-conjugating enzyme E2 M</fullName>
    </alternativeName>
</protein>
<accession>Q6DCZ9</accession>
<keyword id="KW-0007">Acetylation</keyword>
<keyword id="KW-0067">ATP-binding</keyword>
<keyword id="KW-0547">Nucleotide-binding</keyword>
<keyword id="KW-1185">Reference proteome</keyword>
<keyword id="KW-0808">Transferase</keyword>
<keyword id="KW-0833">Ubl conjugation pathway</keyword>
<sequence length="183" mass="20953">MIKLFSLKQQKKEEESAGGTKGSSKKASAAQLRIQKDITELNLPKTCEIEFSDHDDLLNFKLVICPDEGFYKGGKFVFSFKVGQGYPHDPPKVKCETMVYHPNIDLEGNVCLNILREDWKPVLTINSIIYGLQYLFLEPNPEDPLNKEAAEVLQNNRRLFEQNVQRSMRGGYIGSTYFERCLK</sequence>
<comment type="function">
    <text evidence="2">Accepts the ubiquitin-like protein NEDD8 from the UBA3-NAE1 E1 complex and catalyzes its covalent attachment to other proteins. The specific interaction with the E3 ubiquitin ligase rbx1, but not rbx2, suggests that the rbx1-ube2m complex neddylates specific target proteins, such as cul1, cul2, cul3 and cul4. Involved in cell proliferation.</text>
</comment>
<comment type="catalytic activity">
    <reaction evidence="2">
        <text>[E1 NEDD8-activating enzyme]-S-[NEDD8 protein]-yl-L-cysteine + [E2 NEDD8-conjugating enzyme]-L-cysteine = [E1 NEDD8-activating enzyme]-L-cysteine + [E2 NEDD8-conjugating enzyme]-S-[NEDD8-protein]-yl-L-cysteine.</text>
        <dbReference type="EC" id="2.3.2.34"/>
    </reaction>
</comment>
<comment type="pathway">
    <text>Protein modification; protein neddylation.</text>
</comment>
<comment type="domain">
    <text evidence="1">Both the N-terminal docking peptide and the catalytic core domain must bind the uba3-nae1 complex simultaneously for optimal transfer of nedd8.</text>
</comment>
<comment type="PTM">
    <text evidence="1">The acetylation of Met-1 increases affinity for DCUN1D1 by about 2 orders of magnitude and is crucial for NEDD8 transfer to cullins.</text>
</comment>
<comment type="similarity">
    <text evidence="3">Belongs to the ubiquitin-conjugating enzyme family. UBC12 subfamily.</text>
</comment>